<feature type="chain" id="PRO_0000122539" description="Aminomethyltransferase">
    <location>
        <begin position="1"/>
        <end position="361"/>
    </location>
</feature>
<gene>
    <name evidence="1" type="primary">gcvT</name>
    <name type="ordered locus">BF1303</name>
</gene>
<name>GCST_BACFR</name>
<accession>Q64WS3</accession>
<protein>
    <recommendedName>
        <fullName evidence="1">Aminomethyltransferase</fullName>
        <ecNumber evidence="1">2.1.2.10</ecNumber>
    </recommendedName>
    <alternativeName>
        <fullName evidence="1">Glycine cleavage system T protein</fullName>
    </alternativeName>
</protein>
<sequence>MKTTPFTEKHIALGAKMHEFAGYNMPIEYSGIIDEHLTVCNGVGVFDVSHMGEFWVKGPHALDFLQKVTSNNVAALVPGKIQYTCFPNEDGGIVDDLLVYQYEPEKYLLVVNASNIEKDWNWCISHNTEGAELENSSDNMAQLAVQGPKAIQALQKLTDINLADIPYYTFKVGEFAGEKNVIISNTGYTGAGGFELYFYPDAAMKIWDAVFEAGAEFGIKPIGLGARDTLRLEMGFCLYGNDLDDTTSPIEAGLGWITKFVDGKNFTNRSMLEKQKAEGTVRKLVGFEMIDRGIPRHGYELTTAEGDKIGVVTSGTMSPIRKIGIGMGYVKPEYSKIGTEICIDMRGRKLKAVVVKPPFRK</sequence>
<reference key="1">
    <citation type="journal article" date="2004" name="Proc. Natl. Acad. Sci. U.S.A.">
        <title>Genomic analysis of Bacteroides fragilis reveals extensive DNA inversions regulating cell surface adaptation.</title>
        <authorList>
            <person name="Kuwahara T."/>
            <person name="Yamashita A."/>
            <person name="Hirakawa H."/>
            <person name="Nakayama H."/>
            <person name="Toh H."/>
            <person name="Okada N."/>
            <person name="Kuhara S."/>
            <person name="Hattori M."/>
            <person name="Hayashi T."/>
            <person name="Ohnishi Y."/>
        </authorList>
    </citation>
    <scope>NUCLEOTIDE SEQUENCE [LARGE SCALE GENOMIC DNA]</scope>
    <source>
        <strain>YCH46</strain>
    </source>
</reference>
<proteinExistence type="inferred from homology"/>
<dbReference type="EC" id="2.1.2.10" evidence="1"/>
<dbReference type="EMBL" id="AP006841">
    <property type="protein sequence ID" value="BAD48053.1"/>
    <property type="molecule type" value="Genomic_DNA"/>
</dbReference>
<dbReference type="RefSeq" id="WP_005795559.1">
    <property type="nucleotide sequence ID" value="NC_006347.1"/>
</dbReference>
<dbReference type="RefSeq" id="YP_098587.1">
    <property type="nucleotide sequence ID" value="NC_006347.1"/>
</dbReference>
<dbReference type="SMR" id="Q64WS3"/>
<dbReference type="STRING" id="295405.BF1303"/>
<dbReference type="GeneID" id="60368774"/>
<dbReference type="KEGG" id="bfr:BF1303"/>
<dbReference type="PATRIC" id="fig|295405.11.peg.1286"/>
<dbReference type="HOGENOM" id="CLU_007884_10_2_10"/>
<dbReference type="OrthoDB" id="9774591at2"/>
<dbReference type="Proteomes" id="UP000002197">
    <property type="component" value="Chromosome"/>
</dbReference>
<dbReference type="GO" id="GO:0005829">
    <property type="term" value="C:cytosol"/>
    <property type="evidence" value="ECO:0007669"/>
    <property type="project" value="TreeGrafter"/>
</dbReference>
<dbReference type="GO" id="GO:0005960">
    <property type="term" value="C:glycine cleavage complex"/>
    <property type="evidence" value="ECO:0007669"/>
    <property type="project" value="InterPro"/>
</dbReference>
<dbReference type="GO" id="GO:0004047">
    <property type="term" value="F:aminomethyltransferase activity"/>
    <property type="evidence" value="ECO:0007669"/>
    <property type="project" value="UniProtKB-UniRule"/>
</dbReference>
<dbReference type="GO" id="GO:0008483">
    <property type="term" value="F:transaminase activity"/>
    <property type="evidence" value="ECO:0007669"/>
    <property type="project" value="UniProtKB-KW"/>
</dbReference>
<dbReference type="GO" id="GO:0019464">
    <property type="term" value="P:glycine decarboxylation via glycine cleavage system"/>
    <property type="evidence" value="ECO:0007669"/>
    <property type="project" value="UniProtKB-UniRule"/>
</dbReference>
<dbReference type="FunFam" id="2.40.30.110:FF:000003">
    <property type="entry name" value="Aminomethyltransferase"/>
    <property type="match status" value="1"/>
</dbReference>
<dbReference type="FunFam" id="3.30.70.1400:FF:000001">
    <property type="entry name" value="Aminomethyltransferase"/>
    <property type="match status" value="1"/>
</dbReference>
<dbReference type="FunFam" id="4.10.1250.10:FF:000001">
    <property type="entry name" value="Aminomethyltransferase"/>
    <property type="match status" value="1"/>
</dbReference>
<dbReference type="Gene3D" id="2.40.30.110">
    <property type="entry name" value="Aminomethyltransferase beta-barrel domains"/>
    <property type="match status" value="1"/>
</dbReference>
<dbReference type="Gene3D" id="3.30.70.1400">
    <property type="entry name" value="Aminomethyltransferase beta-barrel domains"/>
    <property type="match status" value="1"/>
</dbReference>
<dbReference type="Gene3D" id="4.10.1250.10">
    <property type="entry name" value="Aminomethyltransferase fragment"/>
    <property type="match status" value="1"/>
</dbReference>
<dbReference type="Gene3D" id="3.30.1360.120">
    <property type="entry name" value="Probable tRNA modification gtpase trme, domain 1"/>
    <property type="match status" value="1"/>
</dbReference>
<dbReference type="HAMAP" id="MF_00259">
    <property type="entry name" value="GcvT"/>
    <property type="match status" value="1"/>
</dbReference>
<dbReference type="InterPro" id="IPR006223">
    <property type="entry name" value="GCS_T"/>
</dbReference>
<dbReference type="InterPro" id="IPR022903">
    <property type="entry name" value="GCS_T_bac"/>
</dbReference>
<dbReference type="InterPro" id="IPR013977">
    <property type="entry name" value="GCST_C"/>
</dbReference>
<dbReference type="InterPro" id="IPR006222">
    <property type="entry name" value="GCV_T_N"/>
</dbReference>
<dbReference type="InterPro" id="IPR028896">
    <property type="entry name" value="GcvT/YgfZ/DmdA"/>
</dbReference>
<dbReference type="InterPro" id="IPR029043">
    <property type="entry name" value="GcvT/YgfZ_C"/>
</dbReference>
<dbReference type="InterPro" id="IPR027266">
    <property type="entry name" value="TrmE/GcvT_dom1"/>
</dbReference>
<dbReference type="NCBIfam" id="TIGR00528">
    <property type="entry name" value="gcvT"/>
    <property type="match status" value="1"/>
</dbReference>
<dbReference type="NCBIfam" id="NF001567">
    <property type="entry name" value="PRK00389.1"/>
    <property type="match status" value="1"/>
</dbReference>
<dbReference type="PANTHER" id="PTHR43757">
    <property type="entry name" value="AMINOMETHYLTRANSFERASE"/>
    <property type="match status" value="1"/>
</dbReference>
<dbReference type="PANTHER" id="PTHR43757:SF2">
    <property type="entry name" value="AMINOMETHYLTRANSFERASE, MITOCHONDRIAL"/>
    <property type="match status" value="1"/>
</dbReference>
<dbReference type="Pfam" id="PF01571">
    <property type="entry name" value="GCV_T"/>
    <property type="match status" value="1"/>
</dbReference>
<dbReference type="Pfam" id="PF08669">
    <property type="entry name" value="GCV_T_C"/>
    <property type="match status" value="1"/>
</dbReference>
<dbReference type="PIRSF" id="PIRSF006487">
    <property type="entry name" value="GcvT"/>
    <property type="match status" value="1"/>
</dbReference>
<dbReference type="SUPFAM" id="SSF101790">
    <property type="entry name" value="Aminomethyltransferase beta-barrel domain"/>
    <property type="match status" value="1"/>
</dbReference>
<dbReference type="SUPFAM" id="SSF103025">
    <property type="entry name" value="Folate-binding domain"/>
    <property type="match status" value="1"/>
</dbReference>
<organism>
    <name type="scientific">Bacteroides fragilis (strain YCH46)</name>
    <dbReference type="NCBI Taxonomy" id="295405"/>
    <lineage>
        <taxon>Bacteria</taxon>
        <taxon>Pseudomonadati</taxon>
        <taxon>Bacteroidota</taxon>
        <taxon>Bacteroidia</taxon>
        <taxon>Bacteroidales</taxon>
        <taxon>Bacteroidaceae</taxon>
        <taxon>Bacteroides</taxon>
    </lineage>
</organism>
<keyword id="KW-0032">Aminotransferase</keyword>
<keyword id="KW-0808">Transferase</keyword>
<evidence type="ECO:0000255" key="1">
    <source>
        <dbReference type="HAMAP-Rule" id="MF_00259"/>
    </source>
</evidence>
<comment type="function">
    <text evidence="1">The glycine cleavage system catalyzes the degradation of glycine.</text>
</comment>
<comment type="catalytic activity">
    <reaction evidence="1">
        <text>N(6)-[(R)-S(8)-aminomethyldihydrolipoyl]-L-lysyl-[protein] + (6S)-5,6,7,8-tetrahydrofolate = N(6)-[(R)-dihydrolipoyl]-L-lysyl-[protein] + (6R)-5,10-methylene-5,6,7,8-tetrahydrofolate + NH4(+)</text>
        <dbReference type="Rhea" id="RHEA:16945"/>
        <dbReference type="Rhea" id="RHEA-COMP:10475"/>
        <dbReference type="Rhea" id="RHEA-COMP:10492"/>
        <dbReference type="ChEBI" id="CHEBI:15636"/>
        <dbReference type="ChEBI" id="CHEBI:28938"/>
        <dbReference type="ChEBI" id="CHEBI:57453"/>
        <dbReference type="ChEBI" id="CHEBI:83100"/>
        <dbReference type="ChEBI" id="CHEBI:83143"/>
        <dbReference type="EC" id="2.1.2.10"/>
    </reaction>
</comment>
<comment type="subunit">
    <text evidence="1">The glycine cleavage system is composed of four proteins: P, T, L and H.</text>
</comment>
<comment type="similarity">
    <text evidence="1">Belongs to the GcvT family.</text>
</comment>